<organism>
    <name type="scientific">Scaphirhynchus platorynchus</name>
    <name type="common">Shovelnose sturgeon</name>
    <name type="synonym">Acipenser platorynchus</name>
    <dbReference type="NCBI Taxonomy" id="7910"/>
    <lineage>
        <taxon>Eukaryota</taxon>
        <taxon>Metazoa</taxon>
        <taxon>Chordata</taxon>
        <taxon>Craniata</taxon>
        <taxon>Vertebrata</taxon>
        <taxon>Euteleostomi</taxon>
        <taxon>Actinopterygii</taxon>
        <taxon>Chondrostei</taxon>
        <taxon>Acipenseriformes</taxon>
        <taxon>Acipenseridae</taxon>
        <taxon>Scaphirhynchus</taxon>
    </lineage>
</organism>
<feature type="chain" id="PRO_0000061526" description="Cytochrome b">
    <location>
        <begin position="1" status="less than"/>
        <end position="98" status="greater than"/>
    </location>
</feature>
<feature type="transmembrane region" description="Helical" evidence="2">
    <location>
        <begin position="1" status="less than"/>
        <end position="18"/>
    </location>
</feature>
<feature type="transmembrane region" description="Helical" evidence="2">
    <location>
        <begin position="42"/>
        <end position="63"/>
    </location>
</feature>
<feature type="transmembrane region" description="Helical" evidence="3">
    <location>
        <begin position="78"/>
        <end position="98"/>
    </location>
</feature>
<feature type="binding site" description="axial binding residue" evidence="2">
    <location>
        <position position="48"/>
    </location>
    <ligand>
        <name>heme b</name>
        <dbReference type="ChEBI" id="CHEBI:60344"/>
        <label>b562</label>
    </ligand>
    <ligandPart>
        <name>Fe</name>
        <dbReference type="ChEBI" id="CHEBI:18248"/>
    </ligandPart>
</feature>
<feature type="binding site" description="axial binding residue" evidence="2">
    <location>
        <position position="62"/>
    </location>
    <ligand>
        <name>heme b</name>
        <dbReference type="ChEBI" id="CHEBI:60344"/>
        <label>b566</label>
    </ligand>
    <ligandPart>
        <name>Fe</name>
        <dbReference type="ChEBI" id="CHEBI:18248"/>
    </ligandPart>
</feature>
<feature type="non-terminal residue">
    <location>
        <position position="1"/>
    </location>
</feature>
<feature type="non-terminal residue">
    <location>
        <position position="98"/>
    </location>
</feature>
<name>CYB_SCAPL</name>
<geneLocation type="mitochondrion"/>
<accession>P29672</accession>
<dbReference type="EMBL" id="M64921">
    <property type="protein sequence ID" value="AAB01483.1"/>
    <property type="molecule type" value="Genomic_DNA"/>
</dbReference>
<dbReference type="SMR" id="P29672"/>
<dbReference type="GO" id="GO:0005743">
    <property type="term" value="C:mitochondrial inner membrane"/>
    <property type="evidence" value="ECO:0007669"/>
    <property type="project" value="UniProtKB-SubCell"/>
</dbReference>
<dbReference type="GO" id="GO:0046872">
    <property type="term" value="F:metal ion binding"/>
    <property type="evidence" value="ECO:0007669"/>
    <property type="project" value="UniProtKB-KW"/>
</dbReference>
<dbReference type="GO" id="GO:0008121">
    <property type="term" value="F:ubiquinol-cytochrome-c reductase activity"/>
    <property type="evidence" value="ECO:0007669"/>
    <property type="project" value="TreeGrafter"/>
</dbReference>
<dbReference type="GO" id="GO:0006122">
    <property type="term" value="P:mitochondrial electron transport, ubiquinol to cytochrome c"/>
    <property type="evidence" value="ECO:0007669"/>
    <property type="project" value="TreeGrafter"/>
</dbReference>
<dbReference type="Gene3D" id="1.20.810.10">
    <property type="entry name" value="Cytochrome Bc1 Complex, Chain C"/>
    <property type="match status" value="1"/>
</dbReference>
<dbReference type="InterPro" id="IPR005797">
    <property type="entry name" value="Cyt_b/b6_N"/>
</dbReference>
<dbReference type="InterPro" id="IPR027387">
    <property type="entry name" value="Cytb/b6-like_sf"/>
</dbReference>
<dbReference type="InterPro" id="IPR016174">
    <property type="entry name" value="Di-haem_cyt_TM"/>
</dbReference>
<dbReference type="PANTHER" id="PTHR19271">
    <property type="entry name" value="CYTOCHROME B"/>
    <property type="match status" value="1"/>
</dbReference>
<dbReference type="PANTHER" id="PTHR19271:SF16">
    <property type="entry name" value="CYTOCHROME B"/>
    <property type="match status" value="1"/>
</dbReference>
<dbReference type="Pfam" id="PF00033">
    <property type="entry name" value="Cytochrome_B"/>
    <property type="match status" value="1"/>
</dbReference>
<dbReference type="SUPFAM" id="SSF81342">
    <property type="entry name" value="Transmembrane di-heme cytochromes"/>
    <property type="match status" value="1"/>
</dbReference>
<dbReference type="PROSITE" id="PS51002">
    <property type="entry name" value="CYTB_NTER"/>
    <property type="match status" value="1"/>
</dbReference>
<gene>
    <name type="primary">mt-cyb</name>
    <name type="synonym">cob</name>
    <name type="synonym">cytb</name>
    <name type="synonym">mtcyb</name>
</gene>
<proteinExistence type="inferred from homology"/>
<keyword id="KW-0249">Electron transport</keyword>
<keyword id="KW-0349">Heme</keyword>
<keyword id="KW-0408">Iron</keyword>
<keyword id="KW-0472">Membrane</keyword>
<keyword id="KW-0479">Metal-binding</keyword>
<keyword id="KW-0496">Mitochondrion</keyword>
<keyword id="KW-0999">Mitochondrion inner membrane</keyword>
<keyword id="KW-0679">Respiratory chain</keyword>
<keyword id="KW-0812">Transmembrane</keyword>
<keyword id="KW-1133">Transmembrane helix</keyword>
<keyword id="KW-0813">Transport</keyword>
<keyword id="KW-0830">Ubiquinone</keyword>
<comment type="function">
    <text evidence="2">Component of the ubiquinol-cytochrome c reductase complex (complex III or cytochrome b-c1 complex) that is part of the mitochondrial respiratory chain. The b-c1 complex mediates electron transfer from ubiquinol to cytochrome c. Contributes to the generation of a proton gradient across the mitochondrial membrane that is then used for ATP synthesis.</text>
</comment>
<comment type="cofactor">
    <cofactor evidence="2">
        <name>heme b</name>
        <dbReference type="ChEBI" id="CHEBI:60344"/>
    </cofactor>
    <text evidence="2">Binds 2 heme b groups non-covalently.</text>
</comment>
<comment type="subunit">
    <text evidence="2">The cytochrome bc1 complex contains 3 respiratory subunits (MT-CYB, CYC1 and UQCRFS1), 2 core proteins (UQCRC1 and UQCRC2) and probably 6 low-molecular weight proteins.</text>
</comment>
<comment type="subcellular location">
    <subcellularLocation>
        <location evidence="2">Mitochondrion inner membrane</location>
        <topology evidence="2">Multi-pass membrane protein</topology>
    </subcellularLocation>
</comment>
<comment type="miscellaneous">
    <text evidence="1">Heme 1 (or BL or b562) is low-potential and absorbs at about 562 nm, and heme 2 (or BH or b566) is high-potential and absorbs at about 566 nm.</text>
</comment>
<comment type="similarity">
    <text evidence="3">Belongs to the cytochrome b family.</text>
</comment>
<comment type="caution">
    <text evidence="2">The full-length protein contains only eight transmembrane helices, not nine as predicted by bioinformatics tools.</text>
</comment>
<protein>
    <recommendedName>
        <fullName>Cytochrome b</fullName>
    </recommendedName>
    <alternativeName>
        <fullName>Complex III subunit 3</fullName>
    </alternativeName>
    <alternativeName>
        <fullName>Complex III subunit III</fullName>
    </alternativeName>
    <alternativeName>
        <fullName>Cytochrome b-c1 complex subunit 3</fullName>
    </alternativeName>
    <alternativeName>
        <fullName>Ubiquinol-cytochrome-c reductase complex cytochrome b subunit</fullName>
    </alternativeName>
</protein>
<reference key="1">
    <citation type="journal article" date="1991" name="Mol. Biol. Evol.">
        <title>Phylogenetic relationships of neopterygian fishes, inferred from mitochondrial DNA sequences.</title>
        <authorList>
            <person name="Normark B.B."/>
            <person name="McCune A.R."/>
            <person name="Harrison R.G."/>
        </authorList>
    </citation>
    <scope>NUCLEOTIDE SEQUENCE [GENOMIC DNA]</scope>
</reference>
<sequence>LLGLCLITQILTGLFLAMHYTADISTAFSSVAHICRDVNYGWLIRNVHANGASFFFICLYLHVARGMYYGSYLQKETWNIGVVLLLLTMMTAFVGYVL</sequence>
<evidence type="ECO:0000250" key="1"/>
<evidence type="ECO:0000250" key="2">
    <source>
        <dbReference type="UniProtKB" id="P00157"/>
    </source>
</evidence>
<evidence type="ECO:0000255" key="3">
    <source>
        <dbReference type="PROSITE-ProRule" id="PRU00968"/>
    </source>
</evidence>